<keyword id="KW-0007">Acetylation</keyword>
<keyword id="KW-0687">Ribonucleoprotein</keyword>
<keyword id="KW-0689">Ribosomal protein</keyword>
<keyword id="KW-0694">RNA-binding</keyword>
<keyword id="KW-0699">rRNA-binding</keyword>
<name>RL6_SHIF8</name>
<feature type="chain" id="PRO_1000055309" description="Large ribosomal subunit protein uL6">
    <location>
        <begin position="1"/>
        <end position="177"/>
    </location>
</feature>
<feature type="modified residue" description="N6-acetyllysine" evidence="1">
    <location>
        <position position="44"/>
    </location>
</feature>
<comment type="function">
    <text evidence="1">This protein binds to the 23S rRNA, and is important in its secondary structure. It is located near the subunit interface in the base of the L7/L12 stalk, and near the tRNA binding site of the peptidyltransferase center.</text>
</comment>
<comment type="subunit">
    <text evidence="1">Part of the 50S ribosomal subunit.</text>
</comment>
<comment type="similarity">
    <text evidence="1">Belongs to the universal ribosomal protein uL6 family.</text>
</comment>
<reference key="1">
    <citation type="journal article" date="2006" name="BMC Genomics">
        <title>Complete genome sequence of Shigella flexneri 5b and comparison with Shigella flexneri 2a.</title>
        <authorList>
            <person name="Nie H."/>
            <person name="Yang F."/>
            <person name="Zhang X."/>
            <person name="Yang J."/>
            <person name="Chen L."/>
            <person name="Wang J."/>
            <person name="Xiong Z."/>
            <person name="Peng J."/>
            <person name="Sun L."/>
            <person name="Dong J."/>
            <person name="Xue Y."/>
            <person name="Xu X."/>
            <person name="Chen S."/>
            <person name="Yao Z."/>
            <person name="Shen Y."/>
            <person name="Jin Q."/>
        </authorList>
    </citation>
    <scope>NUCLEOTIDE SEQUENCE [LARGE SCALE GENOMIC DNA]</scope>
    <source>
        <strain>8401</strain>
    </source>
</reference>
<evidence type="ECO:0000255" key="1">
    <source>
        <dbReference type="HAMAP-Rule" id="MF_01365"/>
    </source>
</evidence>
<evidence type="ECO:0000305" key="2"/>
<gene>
    <name evidence="1" type="primary">rplF</name>
    <name type="ordered locus">SFV_3325</name>
</gene>
<dbReference type="EMBL" id="CP000266">
    <property type="protein sequence ID" value="ABF05368.1"/>
    <property type="molecule type" value="Genomic_DNA"/>
</dbReference>
<dbReference type="RefSeq" id="WP_000091945.1">
    <property type="nucleotide sequence ID" value="NC_008258.1"/>
</dbReference>
<dbReference type="SMR" id="Q0SZZ7"/>
<dbReference type="GeneID" id="86948169"/>
<dbReference type="KEGG" id="sfv:SFV_3325"/>
<dbReference type="HOGENOM" id="CLU_065464_1_2_6"/>
<dbReference type="Proteomes" id="UP000000659">
    <property type="component" value="Chromosome"/>
</dbReference>
<dbReference type="GO" id="GO:0022625">
    <property type="term" value="C:cytosolic large ribosomal subunit"/>
    <property type="evidence" value="ECO:0007669"/>
    <property type="project" value="TreeGrafter"/>
</dbReference>
<dbReference type="GO" id="GO:0019843">
    <property type="term" value="F:rRNA binding"/>
    <property type="evidence" value="ECO:0007669"/>
    <property type="project" value="UniProtKB-UniRule"/>
</dbReference>
<dbReference type="GO" id="GO:0003735">
    <property type="term" value="F:structural constituent of ribosome"/>
    <property type="evidence" value="ECO:0007669"/>
    <property type="project" value="InterPro"/>
</dbReference>
<dbReference type="GO" id="GO:0002181">
    <property type="term" value="P:cytoplasmic translation"/>
    <property type="evidence" value="ECO:0007669"/>
    <property type="project" value="TreeGrafter"/>
</dbReference>
<dbReference type="FunFam" id="3.90.930.12:FF:000001">
    <property type="entry name" value="50S ribosomal protein L6"/>
    <property type="match status" value="1"/>
</dbReference>
<dbReference type="FunFam" id="3.90.930.12:FF:000002">
    <property type="entry name" value="50S ribosomal protein L6"/>
    <property type="match status" value="1"/>
</dbReference>
<dbReference type="Gene3D" id="3.90.930.12">
    <property type="entry name" value="Ribosomal protein L6, alpha-beta domain"/>
    <property type="match status" value="2"/>
</dbReference>
<dbReference type="HAMAP" id="MF_01365_B">
    <property type="entry name" value="Ribosomal_uL6_B"/>
    <property type="match status" value="1"/>
</dbReference>
<dbReference type="InterPro" id="IPR000702">
    <property type="entry name" value="Ribosomal_uL6-like"/>
</dbReference>
<dbReference type="InterPro" id="IPR036789">
    <property type="entry name" value="Ribosomal_uL6-like_a/b-dom_sf"/>
</dbReference>
<dbReference type="InterPro" id="IPR020040">
    <property type="entry name" value="Ribosomal_uL6_a/b-dom"/>
</dbReference>
<dbReference type="InterPro" id="IPR019906">
    <property type="entry name" value="Ribosomal_uL6_bac-type"/>
</dbReference>
<dbReference type="InterPro" id="IPR002358">
    <property type="entry name" value="Ribosomal_uL6_CS"/>
</dbReference>
<dbReference type="NCBIfam" id="TIGR03654">
    <property type="entry name" value="L6_bact"/>
    <property type="match status" value="1"/>
</dbReference>
<dbReference type="PANTHER" id="PTHR11655">
    <property type="entry name" value="60S/50S RIBOSOMAL PROTEIN L6/L9"/>
    <property type="match status" value="1"/>
</dbReference>
<dbReference type="PANTHER" id="PTHR11655:SF14">
    <property type="entry name" value="LARGE RIBOSOMAL SUBUNIT PROTEIN UL6M"/>
    <property type="match status" value="1"/>
</dbReference>
<dbReference type="Pfam" id="PF00347">
    <property type="entry name" value="Ribosomal_L6"/>
    <property type="match status" value="2"/>
</dbReference>
<dbReference type="PIRSF" id="PIRSF002162">
    <property type="entry name" value="Ribosomal_L6"/>
    <property type="match status" value="1"/>
</dbReference>
<dbReference type="PRINTS" id="PR00059">
    <property type="entry name" value="RIBOSOMALL6"/>
</dbReference>
<dbReference type="SUPFAM" id="SSF56053">
    <property type="entry name" value="Ribosomal protein L6"/>
    <property type="match status" value="2"/>
</dbReference>
<dbReference type="PROSITE" id="PS00525">
    <property type="entry name" value="RIBOSOMAL_L6_1"/>
    <property type="match status" value="1"/>
</dbReference>
<sequence length="177" mass="18904">MSRVAKAPVVVPAGVDVKINGQVITIKGKNGELTRTLNDAVEVKHADNTLTFGPRDGYADGWAQAGTARALLNSMVIGVTEGFTKKLQLVGVGYRAAVKGNVINLSLGFSHPVDHQLPAGITAECPTQTEIVLKGADKQVIGQVAADLRAYRRPEPYKGKGVRYADEVVRTKEAKKK</sequence>
<protein>
    <recommendedName>
        <fullName evidence="1">Large ribosomal subunit protein uL6</fullName>
    </recommendedName>
    <alternativeName>
        <fullName evidence="2">50S ribosomal protein L6</fullName>
    </alternativeName>
</protein>
<accession>Q0SZZ7</accession>
<proteinExistence type="inferred from homology"/>
<organism>
    <name type="scientific">Shigella flexneri serotype 5b (strain 8401)</name>
    <dbReference type="NCBI Taxonomy" id="373384"/>
    <lineage>
        <taxon>Bacteria</taxon>
        <taxon>Pseudomonadati</taxon>
        <taxon>Pseudomonadota</taxon>
        <taxon>Gammaproteobacteria</taxon>
        <taxon>Enterobacterales</taxon>
        <taxon>Enterobacteriaceae</taxon>
        <taxon>Shigella</taxon>
    </lineage>
</organism>